<proteinExistence type="inferred from homology"/>
<dbReference type="EC" id="2.1.2.3" evidence="1"/>
<dbReference type="EC" id="3.5.4.10" evidence="1"/>
<dbReference type="EMBL" id="CP000020">
    <property type="protein sequence ID" value="AAW86889.1"/>
    <property type="molecule type" value="Genomic_DNA"/>
</dbReference>
<dbReference type="RefSeq" id="WP_011262778.1">
    <property type="nucleotide sequence ID" value="NC_006840.2"/>
</dbReference>
<dbReference type="RefSeq" id="YP_205777.1">
    <property type="nucleotide sequence ID" value="NC_006840.2"/>
</dbReference>
<dbReference type="SMR" id="Q5E257"/>
<dbReference type="STRING" id="312309.VF_2394"/>
<dbReference type="EnsemblBacteria" id="AAW86889">
    <property type="protein sequence ID" value="AAW86889"/>
    <property type="gene ID" value="VF_2394"/>
</dbReference>
<dbReference type="GeneID" id="54165111"/>
<dbReference type="KEGG" id="vfi:VF_2394"/>
<dbReference type="PATRIC" id="fig|312309.11.peg.2429"/>
<dbReference type="eggNOG" id="COG0138">
    <property type="taxonomic scope" value="Bacteria"/>
</dbReference>
<dbReference type="HOGENOM" id="CLU_016316_5_2_6"/>
<dbReference type="OrthoDB" id="9802065at2"/>
<dbReference type="UniPathway" id="UPA00074">
    <property type="reaction ID" value="UER00133"/>
</dbReference>
<dbReference type="UniPathway" id="UPA00074">
    <property type="reaction ID" value="UER00135"/>
</dbReference>
<dbReference type="Proteomes" id="UP000000537">
    <property type="component" value="Chromosome I"/>
</dbReference>
<dbReference type="GO" id="GO:0005829">
    <property type="term" value="C:cytosol"/>
    <property type="evidence" value="ECO:0007669"/>
    <property type="project" value="TreeGrafter"/>
</dbReference>
<dbReference type="GO" id="GO:0003937">
    <property type="term" value="F:IMP cyclohydrolase activity"/>
    <property type="evidence" value="ECO:0007669"/>
    <property type="project" value="UniProtKB-UniRule"/>
</dbReference>
<dbReference type="GO" id="GO:0004643">
    <property type="term" value="F:phosphoribosylaminoimidazolecarboxamide formyltransferase activity"/>
    <property type="evidence" value="ECO:0007669"/>
    <property type="project" value="UniProtKB-UniRule"/>
</dbReference>
<dbReference type="GO" id="GO:0006189">
    <property type="term" value="P:'de novo' IMP biosynthetic process"/>
    <property type="evidence" value="ECO:0007669"/>
    <property type="project" value="UniProtKB-UniRule"/>
</dbReference>
<dbReference type="CDD" id="cd01421">
    <property type="entry name" value="IMPCH"/>
    <property type="match status" value="1"/>
</dbReference>
<dbReference type="FunFam" id="3.40.140.20:FF:000001">
    <property type="entry name" value="Bifunctional purine biosynthesis protein PurH"/>
    <property type="match status" value="1"/>
</dbReference>
<dbReference type="FunFam" id="3.40.140.20:FF:000002">
    <property type="entry name" value="Bifunctional purine biosynthesis protein PurH"/>
    <property type="match status" value="1"/>
</dbReference>
<dbReference type="FunFam" id="3.40.50.1380:FF:000001">
    <property type="entry name" value="Bifunctional purine biosynthesis protein PurH"/>
    <property type="match status" value="1"/>
</dbReference>
<dbReference type="Gene3D" id="3.40.140.20">
    <property type="match status" value="2"/>
</dbReference>
<dbReference type="Gene3D" id="3.40.50.1380">
    <property type="entry name" value="Methylglyoxal synthase-like domain"/>
    <property type="match status" value="1"/>
</dbReference>
<dbReference type="HAMAP" id="MF_00139">
    <property type="entry name" value="PurH"/>
    <property type="match status" value="1"/>
</dbReference>
<dbReference type="InterPro" id="IPR024051">
    <property type="entry name" value="AICAR_Tfase_dup_dom_sf"/>
</dbReference>
<dbReference type="InterPro" id="IPR016193">
    <property type="entry name" value="Cytidine_deaminase-like"/>
</dbReference>
<dbReference type="InterPro" id="IPR011607">
    <property type="entry name" value="MGS-like_dom"/>
</dbReference>
<dbReference type="InterPro" id="IPR036914">
    <property type="entry name" value="MGS-like_dom_sf"/>
</dbReference>
<dbReference type="InterPro" id="IPR002695">
    <property type="entry name" value="PurH-like"/>
</dbReference>
<dbReference type="NCBIfam" id="NF002049">
    <property type="entry name" value="PRK00881.1"/>
    <property type="match status" value="1"/>
</dbReference>
<dbReference type="NCBIfam" id="TIGR00355">
    <property type="entry name" value="purH"/>
    <property type="match status" value="1"/>
</dbReference>
<dbReference type="PANTHER" id="PTHR11692:SF0">
    <property type="entry name" value="BIFUNCTIONAL PURINE BIOSYNTHESIS PROTEIN ATIC"/>
    <property type="match status" value="1"/>
</dbReference>
<dbReference type="PANTHER" id="PTHR11692">
    <property type="entry name" value="BIFUNCTIONAL PURINE BIOSYNTHESIS PROTEIN PURH"/>
    <property type="match status" value="1"/>
</dbReference>
<dbReference type="Pfam" id="PF01808">
    <property type="entry name" value="AICARFT_IMPCHas"/>
    <property type="match status" value="1"/>
</dbReference>
<dbReference type="Pfam" id="PF02142">
    <property type="entry name" value="MGS"/>
    <property type="match status" value="1"/>
</dbReference>
<dbReference type="PIRSF" id="PIRSF000414">
    <property type="entry name" value="AICARFT_IMPCHas"/>
    <property type="match status" value="1"/>
</dbReference>
<dbReference type="SMART" id="SM00798">
    <property type="entry name" value="AICARFT_IMPCHas"/>
    <property type="match status" value="1"/>
</dbReference>
<dbReference type="SMART" id="SM00851">
    <property type="entry name" value="MGS"/>
    <property type="match status" value="1"/>
</dbReference>
<dbReference type="SUPFAM" id="SSF53927">
    <property type="entry name" value="Cytidine deaminase-like"/>
    <property type="match status" value="1"/>
</dbReference>
<dbReference type="SUPFAM" id="SSF52335">
    <property type="entry name" value="Methylglyoxal synthase-like"/>
    <property type="match status" value="1"/>
</dbReference>
<dbReference type="PROSITE" id="PS51855">
    <property type="entry name" value="MGS"/>
    <property type="match status" value="1"/>
</dbReference>
<name>PUR9_ALIF1</name>
<evidence type="ECO:0000255" key="1">
    <source>
        <dbReference type="HAMAP-Rule" id="MF_00139"/>
    </source>
</evidence>
<evidence type="ECO:0000255" key="2">
    <source>
        <dbReference type="PROSITE-ProRule" id="PRU01202"/>
    </source>
</evidence>
<feature type="chain" id="PRO_0000192145" description="Bifunctional purine biosynthesis protein PurH">
    <location>
        <begin position="1"/>
        <end position="530"/>
    </location>
</feature>
<feature type="domain" description="MGS-like" evidence="2">
    <location>
        <begin position="1"/>
        <end position="148"/>
    </location>
</feature>
<organism>
    <name type="scientific">Aliivibrio fischeri (strain ATCC 700601 / ES114)</name>
    <name type="common">Vibrio fischeri</name>
    <dbReference type="NCBI Taxonomy" id="312309"/>
    <lineage>
        <taxon>Bacteria</taxon>
        <taxon>Pseudomonadati</taxon>
        <taxon>Pseudomonadota</taxon>
        <taxon>Gammaproteobacteria</taxon>
        <taxon>Vibrionales</taxon>
        <taxon>Vibrionaceae</taxon>
        <taxon>Aliivibrio</taxon>
    </lineage>
</organism>
<reference key="1">
    <citation type="journal article" date="2005" name="Proc. Natl. Acad. Sci. U.S.A.">
        <title>Complete genome sequence of Vibrio fischeri: a symbiotic bacterium with pathogenic congeners.</title>
        <authorList>
            <person name="Ruby E.G."/>
            <person name="Urbanowski M."/>
            <person name="Campbell J."/>
            <person name="Dunn A."/>
            <person name="Faini M."/>
            <person name="Gunsalus R."/>
            <person name="Lostroh P."/>
            <person name="Lupp C."/>
            <person name="McCann J."/>
            <person name="Millikan D."/>
            <person name="Schaefer A."/>
            <person name="Stabb E."/>
            <person name="Stevens A."/>
            <person name="Visick K."/>
            <person name="Whistler C."/>
            <person name="Greenberg E.P."/>
        </authorList>
    </citation>
    <scope>NUCLEOTIDE SEQUENCE [LARGE SCALE GENOMIC DNA]</scope>
    <source>
        <strain>ATCC 700601 / ES114</strain>
    </source>
</reference>
<accession>Q5E257</accession>
<keyword id="KW-0378">Hydrolase</keyword>
<keyword id="KW-0511">Multifunctional enzyme</keyword>
<keyword id="KW-0658">Purine biosynthesis</keyword>
<keyword id="KW-1185">Reference proteome</keyword>
<keyword id="KW-0808">Transferase</keyword>
<protein>
    <recommendedName>
        <fullName evidence="1">Bifunctional purine biosynthesis protein PurH</fullName>
    </recommendedName>
    <domain>
        <recommendedName>
            <fullName evidence="1">Phosphoribosylaminoimidazolecarboxamide formyltransferase</fullName>
            <ecNumber evidence="1">2.1.2.3</ecNumber>
        </recommendedName>
        <alternativeName>
            <fullName evidence="1">AICAR transformylase</fullName>
        </alternativeName>
    </domain>
    <domain>
        <recommendedName>
            <fullName evidence="1">IMP cyclohydrolase</fullName>
            <ecNumber evidence="1">3.5.4.10</ecNumber>
        </recommendedName>
        <alternativeName>
            <fullName evidence="1">ATIC</fullName>
        </alternativeName>
        <alternativeName>
            <fullName evidence="1">IMP synthase</fullName>
        </alternativeName>
        <alternativeName>
            <fullName evidence="1">Inosinicase</fullName>
        </alternativeName>
    </domain>
</protein>
<comment type="catalytic activity">
    <reaction evidence="1">
        <text>(6R)-10-formyltetrahydrofolate + 5-amino-1-(5-phospho-beta-D-ribosyl)imidazole-4-carboxamide = 5-formamido-1-(5-phospho-D-ribosyl)imidazole-4-carboxamide + (6S)-5,6,7,8-tetrahydrofolate</text>
        <dbReference type="Rhea" id="RHEA:22192"/>
        <dbReference type="ChEBI" id="CHEBI:57453"/>
        <dbReference type="ChEBI" id="CHEBI:58467"/>
        <dbReference type="ChEBI" id="CHEBI:58475"/>
        <dbReference type="ChEBI" id="CHEBI:195366"/>
        <dbReference type="EC" id="2.1.2.3"/>
    </reaction>
</comment>
<comment type="catalytic activity">
    <reaction evidence="1">
        <text>IMP + H2O = 5-formamido-1-(5-phospho-D-ribosyl)imidazole-4-carboxamide</text>
        <dbReference type="Rhea" id="RHEA:18445"/>
        <dbReference type="ChEBI" id="CHEBI:15377"/>
        <dbReference type="ChEBI" id="CHEBI:58053"/>
        <dbReference type="ChEBI" id="CHEBI:58467"/>
        <dbReference type="EC" id="3.5.4.10"/>
    </reaction>
</comment>
<comment type="pathway">
    <text evidence="1">Purine metabolism; IMP biosynthesis via de novo pathway; 5-formamido-1-(5-phospho-D-ribosyl)imidazole-4-carboxamide from 5-amino-1-(5-phospho-D-ribosyl)imidazole-4-carboxamide (10-formyl THF route): step 1/1.</text>
</comment>
<comment type="pathway">
    <text evidence="1">Purine metabolism; IMP biosynthesis via de novo pathway; IMP from 5-formamido-1-(5-phospho-D-ribosyl)imidazole-4-carboxamide: step 1/1.</text>
</comment>
<comment type="domain">
    <text evidence="1">The IMP cyclohydrolase activity resides in the N-terminal region.</text>
</comment>
<comment type="similarity">
    <text evidence="1">Belongs to the PurH family.</text>
</comment>
<gene>
    <name evidence="1" type="primary">purH</name>
    <name type="ordered locus">VF_2394</name>
</gene>
<sequence>MNNARPIRRALISVSDKTGIVEFAQALAERGVDILSTGGTARLLAEKGISVTEVSDYTGFPEMMDGRVKTLHPKVHGGVLGRRGQDDDIMEQHGINPIDMVVVNLYPFAETVAKEGCTLADAVENIDIGGPTMVRSAAKNHKDVTIVVNAHDYDRVIAEMDANEKSLTLETRFDLAIAAFEHTASYDGMIANYFGTMVPSYGENKEGDEESKFPRTFNQQFEKKQDMRYGENSHQAAAFYVEANPEEASVSTARQIQGKALSYNNIADTDAALECVKEFDEPACVIVKHANPCGVALGKDILEAYDRAFKTDPTSAFGGIIAFNRELDAATATAITERQFVEVIIAPSVSTEAVEIVAAKKNLRLLECGEWTTKTTGFDVKRVNGGLLVQDRDQGMVSEDDLQVVSKRQPTAEELKDALFCWKVAKYVKSNAIVYSKGDMTIGVGAGQMSRVYSAKIAGIKAADEGLQVEGCVMASDAFFPFRDGIDAAAEAGIKCVIQPGGSMRDNEVIEAADEHGMAMIFTGMRHFRH</sequence>